<evidence type="ECO:0000255" key="1">
    <source>
        <dbReference type="HAMAP-Rule" id="MF_02016"/>
    </source>
</evidence>
<evidence type="ECO:0000256" key="2">
    <source>
        <dbReference type="SAM" id="MobiDB-lite"/>
    </source>
</evidence>
<reference key="1">
    <citation type="submission" date="2007-08" db="EMBL/GenBank/DDBJ databases">
        <authorList>
            <consortium name="The Citrobacter koseri Genome Sequencing Project"/>
            <person name="McClelland M."/>
            <person name="Sanderson E.K."/>
            <person name="Porwollik S."/>
            <person name="Spieth J."/>
            <person name="Clifton W.S."/>
            <person name="Latreille P."/>
            <person name="Courtney L."/>
            <person name="Wang C."/>
            <person name="Pepin K."/>
            <person name="Bhonagiri V."/>
            <person name="Nash W."/>
            <person name="Johnson M."/>
            <person name="Thiruvilangam P."/>
            <person name="Wilson R."/>
        </authorList>
    </citation>
    <scope>NUCLEOTIDE SEQUENCE [LARGE SCALE GENOMIC DNA]</scope>
    <source>
        <strain>ATCC BAA-895 / CDC 4225-83 / SGSC4696</strain>
    </source>
</reference>
<gene>
    <name evidence="1" type="primary">mltF</name>
    <name type="ordered locus">CKO_00225</name>
</gene>
<name>MLTF_CITK8</name>
<organism>
    <name type="scientific">Citrobacter koseri (strain ATCC BAA-895 / CDC 4225-83 / SGSC4696)</name>
    <dbReference type="NCBI Taxonomy" id="290338"/>
    <lineage>
        <taxon>Bacteria</taxon>
        <taxon>Pseudomonadati</taxon>
        <taxon>Pseudomonadota</taxon>
        <taxon>Gammaproteobacteria</taxon>
        <taxon>Enterobacterales</taxon>
        <taxon>Enterobacteriaceae</taxon>
        <taxon>Citrobacter</taxon>
    </lineage>
</organism>
<sequence length="515" mass="57911">MKKLKINYLFIGILTLLLAAALWPSIPWFGKADNRIAAIQSRGELRVSTIESPLTYARINGKKYGLDYELAQQFASYLGVKLKITVRQNISQLFDDLDNGNADLLAAGLVYNSERVKNYQPGPTYYSVSQQLVYRVGQYRPRTLATVNESQLSIAPGHVVVNDLQALKETKFPDLSWKVDDKKGTAALLSEVISGNLDYTIADSVAISLFQRVHPELAVALDVTDEQPVTWFSQLDDDNTLSAALLDFFNTINEDGSLARMEEKYLGHGDDFDYVDTRTFLRAVDGVLPDLQPLFEKYAQEIDWRLLAAISYQESHWDPLATSPTGVRGLMMLTKNTAQSLGLTDRTDAEQSISGGVRYIQDMMGKVPETVPEEERIWFALAAYNMGYAHMLDARALTVKTRGNPDSWADVKQRLPLLSQKQYYSKLTYGYARGHEAYAYVENIRKYQISLVGYLQEKEKQAAEAIKLAQDYPAVSPAEFDTETFPFSSFLSQPSSNYLSHSPSLPFSLKKKDEN</sequence>
<proteinExistence type="inferred from homology"/>
<comment type="function">
    <text evidence="1">Murein-degrading enzyme that degrades murein glycan strands and insoluble, high-molecular weight murein sacculi, with the concomitant formation of a 1,6-anhydromuramoyl product. Lytic transglycosylases (LTs) play an integral role in the metabolism of the peptidoglycan (PG) sacculus. Their lytic action creates space within the PG sacculus to allow for its expansion as well as for the insertion of various structures such as secretion systems and flagella.</text>
</comment>
<comment type="catalytic activity">
    <reaction evidence="1">
        <text>Exolytic cleavage of the (1-&gt;4)-beta-glycosidic linkage between N-acetylmuramic acid (MurNAc) and N-acetylglucosamine (GlcNAc) residues in peptidoglycan, from either the reducing or the non-reducing ends of the peptidoglycan chains, with concomitant formation of a 1,6-anhydrobond in the MurNAc residue.</text>
        <dbReference type="EC" id="4.2.2.n1"/>
    </reaction>
</comment>
<comment type="subcellular location">
    <subcellularLocation>
        <location>Cell outer membrane</location>
        <topology>Peripheral membrane protein</topology>
    </subcellularLocation>
    <text evidence="1">Attached to the inner leaflet of the outer membrane.</text>
</comment>
<comment type="domain">
    <text evidence="1">The N-terminal domain does not have lytic activity and probably modulates enzymatic activity. The C-terminal domain is the catalytic active domain.</text>
</comment>
<comment type="similarity">
    <text evidence="1">In the N-terminal section; belongs to the bacterial solute-binding protein 3 family.</text>
</comment>
<comment type="similarity">
    <text evidence="1">In the C-terminal section; belongs to the transglycosylase Slt family.</text>
</comment>
<accession>A8AD27</accession>
<feature type="signal peptide" evidence="1">
    <location>
        <begin position="1"/>
        <end position="32"/>
    </location>
</feature>
<feature type="chain" id="PRO_0000353923" description="Membrane-bound lytic murein transglycosylase F">
    <location>
        <begin position="33"/>
        <end position="515"/>
    </location>
</feature>
<feature type="region of interest" description="Non-LT domain" evidence="1">
    <location>
        <begin position="33"/>
        <end position="269"/>
    </location>
</feature>
<feature type="region of interest" description="LT domain" evidence="1">
    <location>
        <begin position="270"/>
        <end position="515"/>
    </location>
</feature>
<feature type="region of interest" description="Disordered" evidence="2">
    <location>
        <begin position="493"/>
        <end position="515"/>
    </location>
</feature>
<feature type="active site" evidence="1">
    <location>
        <position position="314"/>
    </location>
</feature>
<keyword id="KW-0998">Cell outer membrane</keyword>
<keyword id="KW-0961">Cell wall biogenesis/degradation</keyword>
<keyword id="KW-0456">Lyase</keyword>
<keyword id="KW-0472">Membrane</keyword>
<keyword id="KW-1185">Reference proteome</keyword>
<keyword id="KW-0732">Signal</keyword>
<protein>
    <recommendedName>
        <fullName evidence="1">Membrane-bound lytic murein transglycosylase F</fullName>
        <ecNumber evidence="1">4.2.2.n1</ecNumber>
    </recommendedName>
    <alternativeName>
        <fullName evidence="1">Murein lyase F</fullName>
    </alternativeName>
</protein>
<dbReference type="EC" id="4.2.2.n1" evidence="1"/>
<dbReference type="EMBL" id="CP000822">
    <property type="protein sequence ID" value="ABV11390.1"/>
    <property type="molecule type" value="Genomic_DNA"/>
</dbReference>
<dbReference type="RefSeq" id="WP_012131223.1">
    <property type="nucleotide sequence ID" value="NC_009792.1"/>
</dbReference>
<dbReference type="SMR" id="A8AD27"/>
<dbReference type="STRING" id="290338.CKO_00225"/>
<dbReference type="CAZy" id="GH23">
    <property type="family name" value="Glycoside Hydrolase Family 23"/>
</dbReference>
<dbReference type="GeneID" id="45134515"/>
<dbReference type="KEGG" id="cko:CKO_00225"/>
<dbReference type="HOGENOM" id="CLU_027494_0_1_6"/>
<dbReference type="OrthoDB" id="9815002at2"/>
<dbReference type="Proteomes" id="UP000008148">
    <property type="component" value="Chromosome"/>
</dbReference>
<dbReference type="GO" id="GO:0009279">
    <property type="term" value="C:cell outer membrane"/>
    <property type="evidence" value="ECO:0007669"/>
    <property type="project" value="UniProtKB-SubCell"/>
</dbReference>
<dbReference type="GO" id="GO:0008933">
    <property type="term" value="F:peptidoglycan lytic transglycosylase activity"/>
    <property type="evidence" value="ECO:0007669"/>
    <property type="project" value="UniProtKB-UniRule"/>
</dbReference>
<dbReference type="GO" id="GO:0016998">
    <property type="term" value="P:cell wall macromolecule catabolic process"/>
    <property type="evidence" value="ECO:0007669"/>
    <property type="project" value="UniProtKB-UniRule"/>
</dbReference>
<dbReference type="GO" id="GO:0071555">
    <property type="term" value="P:cell wall organization"/>
    <property type="evidence" value="ECO:0007669"/>
    <property type="project" value="UniProtKB-KW"/>
</dbReference>
<dbReference type="GO" id="GO:0009253">
    <property type="term" value="P:peptidoglycan catabolic process"/>
    <property type="evidence" value="ECO:0007669"/>
    <property type="project" value="TreeGrafter"/>
</dbReference>
<dbReference type="CDD" id="cd13403">
    <property type="entry name" value="MLTF-like"/>
    <property type="match status" value="1"/>
</dbReference>
<dbReference type="CDD" id="cd01009">
    <property type="entry name" value="PBP2_YfhD_N"/>
    <property type="match status" value="1"/>
</dbReference>
<dbReference type="FunFam" id="1.10.530.10:FF:000003">
    <property type="entry name" value="Membrane-bound lytic murein transglycosylase F"/>
    <property type="match status" value="1"/>
</dbReference>
<dbReference type="FunFam" id="3.40.190.10:FF:000051">
    <property type="entry name" value="Membrane-bound lytic murein transglycosylase F"/>
    <property type="match status" value="1"/>
</dbReference>
<dbReference type="Gene3D" id="1.10.530.10">
    <property type="match status" value="1"/>
</dbReference>
<dbReference type="Gene3D" id="3.40.190.10">
    <property type="entry name" value="Periplasmic binding protein-like II"/>
    <property type="match status" value="2"/>
</dbReference>
<dbReference type="HAMAP" id="MF_02016">
    <property type="entry name" value="MltF"/>
    <property type="match status" value="1"/>
</dbReference>
<dbReference type="InterPro" id="IPR023346">
    <property type="entry name" value="Lysozyme-like_dom_sf"/>
</dbReference>
<dbReference type="InterPro" id="IPR023703">
    <property type="entry name" value="MltF"/>
</dbReference>
<dbReference type="InterPro" id="IPR001638">
    <property type="entry name" value="Solute-binding_3/MltF_N"/>
</dbReference>
<dbReference type="InterPro" id="IPR000189">
    <property type="entry name" value="Transglyc_AS"/>
</dbReference>
<dbReference type="InterPro" id="IPR008258">
    <property type="entry name" value="Transglycosylase_SLT_dom_1"/>
</dbReference>
<dbReference type="NCBIfam" id="NF008112">
    <property type="entry name" value="PRK10859.1"/>
    <property type="match status" value="1"/>
</dbReference>
<dbReference type="PANTHER" id="PTHR35936">
    <property type="entry name" value="MEMBRANE-BOUND LYTIC MUREIN TRANSGLYCOSYLASE F"/>
    <property type="match status" value="1"/>
</dbReference>
<dbReference type="PANTHER" id="PTHR35936:SF32">
    <property type="entry name" value="MEMBRANE-BOUND LYTIC MUREIN TRANSGLYCOSYLASE F"/>
    <property type="match status" value="1"/>
</dbReference>
<dbReference type="Pfam" id="PF00497">
    <property type="entry name" value="SBP_bac_3"/>
    <property type="match status" value="1"/>
</dbReference>
<dbReference type="Pfam" id="PF01464">
    <property type="entry name" value="SLT"/>
    <property type="match status" value="1"/>
</dbReference>
<dbReference type="SMART" id="SM00062">
    <property type="entry name" value="PBPb"/>
    <property type="match status" value="1"/>
</dbReference>
<dbReference type="SUPFAM" id="SSF53955">
    <property type="entry name" value="Lysozyme-like"/>
    <property type="match status" value="1"/>
</dbReference>
<dbReference type="SUPFAM" id="SSF53850">
    <property type="entry name" value="Periplasmic binding protein-like II"/>
    <property type="match status" value="1"/>
</dbReference>
<dbReference type="PROSITE" id="PS00922">
    <property type="entry name" value="TRANSGLYCOSYLASE"/>
    <property type="match status" value="1"/>
</dbReference>